<sequence length="115" mass="12795">MHELSIARSIVELVEEQADNRGASVVEELELEIGHLSGVEIQTLEFALDSAIKGSKLEKARIIRHYIEGEGQCSDCETIFPMNALFSPCPHCGSYLVKILKGKELRVKSIVIKKE</sequence>
<feature type="chain" id="PRO_1000023846" description="Hydrogenase maturation factor HypA">
    <location>
        <begin position="1"/>
        <end position="115"/>
    </location>
</feature>
<feature type="binding site" evidence="1">
    <location>
        <position position="2"/>
    </location>
    <ligand>
        <name>Ni(2+)</name>
        <dbReference type="ChEBI" id="CHEBI:49786"/>
    </ligand>
</feature>
<feature type="binding site" evidence="1">
    <location>
        <position position="73"/>
    </location>
    <ligand>
        <name>Zn(2+)</name>
        <dbReference type="ChEBI" id="CHEBI:29105"/>
    </ligand>
</feature>
<feature type="binding site" evidence="1">
    <location>
        <position position="76"/>
    </location>
    <ligand>
        <name>Zn(2+)</name>
        <dbReference type="ChEBI" id="CHEBI:29105"/>
    </ligand>
</feature>
<feature type="binding site" evidence="1">
    <location>
        <position position="89"/>
    </location>
    <ligand>
        <name>Zn(2+)</name>
        <dbReference type="ChEBI" id="CHEBI:29105"/>
    </ligand>
</feature>
<feature type="binding site" evidence="1">
    <location>
        <position position="92"/>
    </location>
    <ligand>
        <name>Zn(2+)</name>
        <dbReference type="ChEBI" id="CHEBI:29105"/>
    </ligand>
</feature>
<organism>
    <name type="scientific">Parabacteroides distasonis (strain ATCC 8503 / DSM 20701 / CIP 104284 / JCM 5825 / NCTC 11152)</name>
    <dbReference type="NCBI Taxonomy" id="435591"/>
    <lineage>
        <taxon>Bacteria</taxon>
        <taxon>Pseudomonadati</taxon>
        <taxon>Bacteroidota</taxon>
        <taxon>Bacteroidia</taxon>
        <taxon>Bacteroidales</taxon>
        <taxon>Tannerellaceae</taxon>
        <taxon>Parabacteroides</taxon>
    </lineage>
</organism>
<gene>
    <name evidence="1" type="primary">hypA</name>
    <name type="ordered locus">BDI_1806</name>
</gene>
<protein>
    <recommendedName>
        <fullName evidence="1">Hydrogenase maturation factor HypA</fullName>
    </recommendedName>
</protein>
<comment type="function">
    <text evidence="1">Involved in the maturation of [NiFe] hydrogenases. Required for nickel insertion into the metal center of the hydrogenase.</text>
</comment>
<comment type="similarity">
    <text evidence="1">Belongs to the HypA/HybF family.</text>
</comment>
<name>HYPA_PARD8</name>
<dbReference type="EMBL" id="CP000140">
    <property type="protein sequence ID" value="ABR43545.1"/>
    <property type="molecule type" value="Genomic_DNA"/>
</dbReference>
<dbReference type="RefSeq" id="WP_005855027.1">
    <property type="nucleotide sequence ID" value="NZ_LR215978.1"/>
</dbReference>
<dbReference type="SMR" id="A6LCY1"/>
<dbReference type="STRING" id="435591.BDI_1806"/>
<dbReference type="PaxDb" id="435591-BDI_1806"/>
<dbReference type="KEGG" id="pdi:BDI_1806"/>
<dbReference type="eggNOG" id="COG0375">
    <property type="taxonomic scope" value="Bacteria"/>
</dbReference>
<dbReference type="HOGENOM" id="CLU_126929_0_0_10"/>
<dbReference type="BioCyc" id="PDIS435591:G1G5A-1858-MONOMER"/>
<dbReference type="Proteomes" id="UP000000566">
    <property type="component" value="Chromosome"/>
</dbReference>
<dbReference type="GO" id="GO:0016151">
    <property type="term" value="F:nickel cation binding"/>
    <property type="evidence" value="ECO:0007669"/>
    <property type="project" value="UniProtKB-UniRule"/>
</dbReference>
<dbReference type="GO" id="GO:0008270">
    <property type="term" value="F:zinc ion binding"/>
    <property type="evidence" value="ECO:0007669"/>
    <property type="project" value="UniProtKB-UniRule"/>
</dbReference>
<dbReference type="GO" id="GO:0051604">
    <property type="term" value="P:protein maturation"/>
    <property type="evidence" value="ECO:0007669"/>
    <property type="project" value="InterPro"/>
</dbReference>
<dbReference type="GO" id="GO:0036211">
    <property type="term" value="P:protein modification process"/>
    <property type="evidence" value="ECO:0007669"/>
    <property type="project" value="UniProtKB-UniRule"/>
</dbReference>
<dbReference type="Gene3D" id="3.30.2320.80">
    <property type="match status" value="1"/>
</dbReference>
<dbReference type="HAMAP" id="MF_00213">
    <property type="entry name" value="HypA_HybF"/>
    <property type="match status" value="1"/>
</dbReference>
<dbReference type="InterPro" id="IPR000688">
    <property type="entry name" value="HypA/HybF"/>
</dbReference>
<dbReference type="NCBIfam" id="TIGR00100">
    <property type="entry name" value="hypA"/>
    <property type="match status" value="1"/>
</dbReference>
<dbReference type="PANTHER" id="PTHR34535">
    <property type="entry name" value="HYDROGENASE MATURATION FACTOR HYPA"/>
    <property type="match status" value="1"/>
</dbReference>
<dbReference type="PANTHER" id="PTHR34535:SF3">
    <property type="entry name" value="HYDROGENASE MATURATION FACTOR HYPA"/>
    <property type="match status" value="1"/>
</dbReference>
<dbReference type="Pfam" id="PF01155">
    <property type="entry name" value="HypA"/>
    <property type="match status" value="1"/>
</dbReference>
<dbReference type="PIRSF" id="PIRSF004761">
    <property type="entry name" value="Hydrgn_mat_HypA"/>
    <property type="match status" value="1"/>
</dbReference>
<accession>A6LCY1</accession>
<reference key="1">
    <citation type="journal article" date="2007" name="PLoS Biol.">
        <title>Evolution of symbiotic bacteria in the distal human intestine.</title>
        <authorList>
            <person name="Xu J."/>
            <person name="Mahowald M.A."/>
            <person name="Ley R.E."/>
            <person name="Lozupone C.A."/>
            <person name="Hamady M."/>
            <person name="Martens E.C."/>
            <person name="Henrissat B."/>
            <person name="Coutinho P.M."/>
            <person name="Minx P."/>
            <person name="Latreille P."/>
            <person name="Cordum H."/>
            <person name="Van Brunt A."/>
            <person name="Kim K."/>
            <person name="Fulton R.S."/>
            <person name="Fulton L.A."/>
            <person name="Clifton S.W."/>
            <person name="Wilson R.K."/>
            <person name="Knight R.D."/>
            <person name="Gordon J.I."/>
        </authorList>
    </citation>
    <scope>NUCLEOTIDE SEQUENCE [LARGE SCALE GENOMIC DNA]</scope>
    <source>
        <strain>ATCC 8503 / DSM 20701 / CIP 104284 / JCM 5825 / NCTC 11152</strain>
    </source>
</reference>
<keyword id="KW-0479">Metal-binding</keyword>
<keyword id="KW-0533">Nickel</keyword>
<keyword id="KW-1185">Reference proteome</keyword>
<keyword id="KW-0862">Zinc</keyword>
<evidence type="ECO:0000255" key="1">
    <source>
        <dbReference type="HAMAP-Rule" id="MF_00213"/>
    </source>
</evidence>
<proteinExistence type="inferred from homology"/>